<dbReference type="EC" id="1.3.3.3" evidence="1"/>
<dbReference type="EMBL" id="CP000282">
    <property type="protein sequence ID" value="ABD79289.1"/>
    <property type="molecule type" value="Genomic_DNA"/>
</dbReference>
<dbReference type="RefSeq" id="WP_011466513.1">
    <property type="nucleotide sequence ID" value="NC_007912.1"/>
</dbReference>
<dbReference type="SMR" id="Q21PU0"/>
<dbReference type="STRING" id="203122.Sde_0025"/>
<dbReference type="GeneID" id="98611745"/>
<dbReference type="KEGG" id="sde:Sde_0025"/>
<dbReference type="eggNOG" id="COG0408">
    <property type="taxonomic scope" value="Bacteria"/>
</dbReference>
<dbReference type="HOGENOM" id="CLU_026169_0_1_6"/>
<dbReference type="OrthoDB" id="9777553at2"/>
<dbReference type="UniPathway" id="UPA00251">
    <property type="reaction ID" value="UER00322"/>
</dbReference>
<dbReference type="Proteomes" id="UP000001947">
    <property type="component" value="Chromosome"/>
</dbReference>
<dbReference type="GO" id="GO:0005737">
    <property type="term" value="C:cytoplasm"/>
    <property type="evidence" value="ECO:0007669"/>
    <property type="project" value="UniProtKB-SubCell"/>
</dbReference>
<dbReference type="GO" id="GO:0004109">
    <property type="term" value="F:coproporphyrinogen oxidase activity"/>
    <property type="evidence" value="ECO:0007669"/>
    <property type="project" value="UniProtKB-UniRule"/>
</dbReference>
<dbReference type="GO" id="GO:0046872">
    <property type="term" value="F:metal ion binding"/>
    <property type="evidence" value="ECO:0007669"/>
    <property type="project" value="UniProtKB-KW"/>
</dbReference>
<dbReference type="GO" id="GO:0042803">
    <property type="term" value="F:protein homodimerization activity"/>
    <property type="evidence" value="ECO:0000250"/>
    <property type="project" value="UniProtKB"/>
</dbReference>
<dbReference type="GO" id="GO:0006782">
    <property type="term" value="P:protoporphyrinogen IX biosynthetic process"/>
    <property type="evidence" value="ECO:0007669"/>
    <property type="project" value="UniProtKB-UniRule"/>
</dbReference>
<dbReference type="FunFam" id="3.40.1500.10:FF:000001">
    <property type="entry name" value="Oxygen-dependent coproporphyrinogen-III oxidase"/>
    <property type="match status" value="1"/>
</dbReference>
<dbReference type="Gene3D" id="3.40.1500.10">
    <property type="entry name" value="Coproporphyrinogen III oxidase, aerobic"/>
    <property type="match status" value="1"/>
</dbReference>
<dbReference type="HAMAP" id="MF_00333">
    <property type="entry name" value="Coprogen_oxidas"/>
    <property type="match status" value="1"/>
</dbReference>
<dbReference type="InterPro" id="IPR001260">
    <property type="entry name" value="Coprogen_oxidase_aer"/>
</dbReference>
<dbReference type="InterPro" id="IPR036406">
    <property type="entry name" value="Coprogen_oxidase_aer_sf"/>
</dbReference>
<dbReference type="InterPro" id="IPR018375">
    <property type="entry name" value="Coprogen_oxidase_CS"/>
</dbReference>
<dbReference type="NCBIfam" id="NF003727">
    <property type="entry name" value="PRK05330.1"/>
    <property type="match status" value="1"/>
</dbReference>
<dbReference type="PANTHER" id="PTHR10755">
    <property type="entry name" value="COPROPORPHYRINOGEN III OXIDASE, MITOCHONDRIAL"/>
    <property type="match status" value="1"/>
</dbReference>
<dbReference type="PANTHER" id="PTHR10755:SF0">
    <property type="entry name" value="OXYGEN-DEPENDENT COPROPORPHYRINOGEN-III OXIDASE, MITOCHONDRIAL"/>
    <property type="match status" value="1"/>
</dbReference>
<dbReference type="Pfam" id="PF01218">
    <property type="entry name" value="Coprogen_oxidas"/>
    <property type="match status" value="1"/>
</dbReference>
<dbReference type="PIRSF" id="PIRSF000166">
    <property type="entry name" value="Coproporphyri_ox"/>
    <property type="match status" value="1"/>
</dbReference>
<dbReference type="PRINTS" id="PR00073">
    <property type="entry name" value="COPRGNOXDASE"/>
</dbReference>
<dbReference type="SUPFAM" id="SSF102886">
    <property type="entry name" value="Coproporphyrinogen III oxidase"/>
    <property type="match status" value="1"/>
</dbReference>
<dbReference type="PROSITE" id="PS01021">
    <property type="entry name" value="COPROGEN_OXIDASE"/>
    <property type="match status" value="1"/>
</dbReference>
<keyword id="KW-0963">Cytoplasm</keyword>
<keyword id="KW-0350">Heme biosynthesis</keyword>
<keyword id="KW-0479">Metal-binding</keyword>
<keyword id="KW-0560">Oxidoreductase</keyword>
<keyword id="KW-0627">Porphyrin biosynthesis</keyword>
<keyword id="KW-1185">Reference proteome</keyword>
<evidence type="ECO:0000255" key="1">
    <source>
        <dbReference type="HAMAP-Rule" id="MF_00333"/>
    </source>
</evidence>
<gene>
    <name evidence="1" type="primary">hemF</name>
    <name type="ordered locus">Sde_0025</name>
</gene>
<accession>Q21PU0</accession>
<feature type="chain" id="PRO_1000119817" description="Oxygen-dependent coproporphyrinogen-III oxidase">
    <location>
        <begin position="1"/>
        <end position="303"/>
    </location>
</feature>
<feature type="region of interest" description="Important for dimerization" evidence="1">
    <location>
        <begin position="242"/>
        <end position="277"/>
    </location>
</feature>
<feature type="active site" description="Proton donor" evidence="1">
    <location>
        <position position="108"/>
    </location>
</feature>
<feature type="binding site" evidence="1">
    <location>
        <position position="94"/>
    </location>
    <ligand>
        <name>substrate</name>
    </ligand>
</feature>
<feature type="binding site" evidence="1">
    <location>
        <position position="98"/>
    </location>
    <ligand>
        <name>a divalent metal cation</name>
        <dbReference type="ChEBI" id="CHEBI:60240"/>
    </ligand>
</feature>
<feature type="binding site" evidence="1">
    <location>
        <position position="108"/>
    </location>
    <ligand>
        <name>a divalent metal cation</name>
        <dbReference type="ChEBI" id="CHEBI:60240"/>
    </ligand>
</feature>
<feature type="binding site" evidence="1">
    <location>
        <begin position="110"/>
        <end position="112"/>
    </location>
    <ligand>
        <name>substrate</name>
    </ligand>
</feature>
<feature type="binding site" evidence="1">
    <location>
        <position position="147"/>
    </location>
    <ligand>
        <name>a divalent metal cation</name>
        <dbReference type="ChEBI" id="CHEBI:60240"/>
    </ligand>
</feature>
<feature type="binding site" evidence="1">
    <location>
        <position position="177"/>
    </location>
    <ligand>
        <name>a divalent metal cation</name>
        <dbReference type="ChEBI" id="CHEBI:60240"/>
    </ligand>
</feature>
<feature type="binding site" evidence="1">
    <location>
        <begin position="260"/>
        <end position="262"/>
    </location>
    <ligand>
        <name>substrate</name>
    </ligand>
</feature>
<feature type="site" description="Important for dimerization" evidence="1">
    <location>
        <position position="177"/>
    </location>
</feature>
<proteinExistence type="inferred from homology"/>
<sequence>MTASNKQAVKAYLLNLQDKICQVLAAVDGKETFVEDSWQRPEGGGGRSRVLTNGAVIEKGGVNFSHVHGSSMPASATAHRPELAGRSFEAMGVSLVIHPNNPHVPTSHANVRFFIAEKEGAEPVWWFGGGYDLTPYYGNDEDCRHWHNTAKAACAPFGEDKYPRYKKWCDEYFYLKHRDEPRGVGGLFFDDLNELGFDQSFAFMQAVGDSYTQAYVPIVERRKDEPYNQAQRDFQLYRRGRYVEFNLVYDRGTLFGLQTGGRTESILMSLPPLVRWEYDWQPQPNTPEARLYEHYLQPQDWAE</sequence>
<comment type="function">
    <text evidence="1">Involved in the heme biosynthesis. Catalyzes the aerobic oxidative decarboxylation of propionate groups of rings A and B of coproporphyrinogen-III to yield the vinyl groups in protoporphyrinogen-IX.</text>
</comment>
<comment type="catalytic activity">
    <reaction evidence="1">
        <text>coproporphyrinogen III + O2 + 2 H(+) = protoporphyrinogen IX + 2 CO2 + 2 H2O</text>
        <dbReference type="Rhea" id="RHEA:18257"/>
        <dbReference type="ChEBI" id="CHEBI:15377"/>
        <dbReference type="ChEBI" id="CHEBI:15378"/>
        <dbReference type="ChEBI" id="CHEBI:15379"/>
        <dbReference type="ChEBI" id="CHEBI:16526"/>
        <dbReference type="ChEBI" id="CHEBI:57307"/>
        <dbReference type="ChEBI" id="CHEBI:57309"/>
        <dbReference type="EC" id="1.3.3.3"/>
    </reaction>
</comment>
<comment type="cofactor">
    <cofactor evidence="1">
        <name>a divalent metal cation</name>
        <dbReference type="ChEBI" id="CHEBI:60240"/>
    </cofactor>
</comment>
<comment type="pathway">
    <text evidence="1">Porphyrin-containing compound metabolism; protoporphyrin-IX biosynthesis; protoporphyrinogen-IX from coproporphyrinogen-III (O2 route): step 1/1.</text>
</comment>
<comment type="subunit">
    <text evidence="1">Homodimer.</text>
</comment>
<comment type="subcellular location">
    <subcellularLocation>
        <location evidence="1">Cytoplasm</location>
    </subcellularLocation>
</comment>
<comment type="similarity">
    <text evidence="1">Belongs to the aerobic coproporphyrinogen-III oxidase family.</text>
</comment>
<protein>
    <recommendedName>
        <fullName evidence="1">Oxygen-dependent coproporphyrinogen-III oxidase</fullName>
        <shortName evidence="1">CPO</shortName>
        <shortName evidence="1">Coprogen oxidase</shortName>
        <shortName evidence="1">Coproporphyrinogenase</shortName>
        <ecNumber evidence="1">1.3.3.3</ecNumber>
    </recommendedName>
</protein>
<organism>
    <name type="scientific">Saccharophagus degradans (strain 2-40 / ATCC 43961 / DSM 17024)</name>
    <dbReference type="NCBI Taxonomy" id="203122"/>
    <lineage>
        <taxon>Bacteria</taxon>
        <taxon>Pseudomonadati</taxon>
        <taxon>Pseudomonadota</taxon>
        <taxon>Gammaproteobacteria</taxon>
        <taxon>Cellvibrionales</taxon>
        <taxon>Cellvibrionaceae</taxon>
        <taxon>Saccharophagus</taxon>
    </lineage>
</organism>
<name>HEM6_SACD2</name>
<reference key="1">
    <citation type="journal article" date="2008" name="PLoS Genet.">
        <title>Complete genome sequence of the complex carbohydrate-degrading marine bacterium, Saccharophagus degradans strain 2-40 T.</title>
        <authorList>
            <person name="Weiner R.M."/>
            <person name="Taylor L.E. II"/>
            <person name="Henrissat B."/>
            <person name="Hauser L."/>
            <person name="Land M."/>
            <person name="Coutinho P.M."/>
            <person name="Rancurel C."/>
            <person name="Saunders E.H."/>
            <person name="Longmire A.G."/>
            <person name="Zhang H."/>
            <person name="Bayer E.A."/>
            <person name="Gilbert H.J."/>
            <person name="Larimer F."/>
            <person name="Zhulin I.B."/>
            <person name="Ekborg N.A."/>
            <person name="Lamed R."/>
            <person name="Richardson P.M."/>
            <person name="Borovok I."/>
            <person name="Hutcheson S."/>
        </authorList>
    </citation>
    <scope>NUCLEOTIDE SEQUENCE [LARGE SCALE GENOMIC DNA]</scope>
    <source>
        <strain>2-40 / ATCC 43961 / DSM 17024</strain>
    </source>
</reference>